<accession>P32194</accession>
<organism>
    <name type="scientific">Sus scrofa</name>
    <name type="common">Pig</name>
    <dbReference type="NCBI Taxonomy" id="9823"/>
    <lineage>
        <taxon>Eukaryota</taxon>
        <taxon>Metazoa</taxon>
        <taxon>Chordata</taxon>
        <taxon>Craniata</taxon>
        <taxon>Vertebrata</taxon>
        <taxon>Euteleostomi</taxon>
        <taxon>Mammalia</taxon>
        <taxon>Eutheria</taxon>
        <taxon>Laurasiatheria</taxon>
        <taxon>Artiodactyla</taxon>
        <taxon>Suina</taxon>
        <taxon>Suidae</taxon>
        <taxon>Sus</taxon>
    </lineage>
</organism>
<name>PG1_PIG</name>
<keyword id="KW-0002">3D-structure</keyword>
<keyword id="KW-0027">Amidation</keyword>
<keyword id="KW-0044">Antibiotic</keyword>
<keyword id="KW-0929">Antimicrobial</keyword>
<keyword id="KW-0903">Direct protein sequencing</keyword>
<keyword id="KW-1015">Disulfide bond</keyword>
<keyword id="KW-1185">Reference proteome</keyword>
<keyword id="KW-0964">Secreted</keyword>
<keyword id="KW-0732">Signal</keyword>
<feature type="signal peptide" evidence="2">
    <location>
        <begin position="1"/>
        <end position="29"/>
    </location>
</feature>
<feature type="propeptide" id="PRO_0000004744" evidence="5 6">
    <location>
        <begin position="30"/>
        <end position="130"/>
    </location>
</feature>
<feature type="peptide" id="PRO_0000004745" description="Protegrin-1">
    <location>
        <begin position="131"/>
        <end position="148"/>
    </location>
</feature>
<feature type="region of interest" description="Disordered" evidence="3">
    <location>
        <begin position="61"/>
        <end position="80"/>
    </location>
</feature>
<feature type="modified residue" description="Arginine amide" evidence="4">
    <location>
        <position position="148"/>
    </location>
</feature>
<feature type="disulfide bond" evidence="1">
    <location>
        <begin position="85"/>
        <end position="96"/>
    </location>
</feature>
<feature type="disulfide bond" evidence="1">
    <location>
        <begin position="107"/>
        <end position="124"/>
    </location>
</feature>
<feature type="disulfide bond">
    <location>
        <begin position="136"/>
        <end position="145"/>
    </location>
</feature>
<feature type="disulfide bond">
    <location>
        <begin position="138"/>
        <end position="143"/>
    </location>
</feature>
<feature type="strand" evidence="8">
    <location>
        <begin position="133"/>
        <end position="139"/>
    </location>
</feature>
<feature type="strand" evidence="8">
    <location>
        <begin position="142"/>
        <end position="147"/>
    </location>
</feature>
<sequence length="149" mass="16677">METQRASLCLGRWSLWLLLLALVVPSASAQALSYREAVLRAVDRLNEQSSEANLYRLLELDQPPKADEDPGTPKPVSFTVKETVCPRPTRQPPELCDFKENGRVKQCVGTVTLDQIKDPLDITCNEVQGVRGGRLCYCRRRFCVCVGRG</sequence>
<comment type="function">
    <text>Microbicidal activity. Active against E.coli, Listeria monocytogenes and C.albicans, in vitro.</text>
</comment>
<comment type="subcellular location">
    <subcellularLocation>
        <location>Secreted</location>
    </subcellularLocation>
</comment>
<comment type="similarity">
    <text evidence="7">Belongs to the cathelicidin family.</text>
</comment>
<proteinExistence type="evidence at protein level"/>
<reference key="1">
    <citation type="journal article" date="1994" name="FEBS Lett.">
        <title>Identification of a new member of the protegrin family by cDNA cloning.</title>
        <authorList>
            <person name="Zhao C."/>
            <person name="Liu L."/>
            <person name="Lehrer R.I."/>
        </authorList>
    </citation>
    <scope>NUCLEOTIDE SEQUENCE [MRNA]</scope>
    <scope>AMIDATION AT ARG-148</scope>
    <source>
        <tissue>Bone marrow</tissue>
    </source>
</reference>
<reference key="2">
    <citation type="journal article" date="1995" name="FEBS Lett.">
        <title>The structure of porcine protegrin genes.</title>
        <authorList>
            <person name="Zhao C."/>
            <person name="Ganz T."/>
            <person name="Lehrer R.I."/>
        </authorList>
    </citation>
    <scope>NUCLEOTIDE SEQUENCE [GENOMIC DNA]</scope>
    <source>
        <strain>Red Duroc</strain>
    </source>
</reference>
<reference key="3">
    <citation type="journal article" date="1993" name="FEBS Lett.">
        <title>Protegrins: leukocyte antimicrobial peptides that combine features of corticostatic defensins and tachyplesins.</title>
        <authorList>
            <person name="Kokryakov V.N."/>
            <person name="Harwig S.S.L."/>
            <person name="Panyutich E.A."/>
            <person name="Shevchenko A.A."/>
            <person name="Aleshina G.M."/>
            <person name="Shamova O.V."/>
            <person name="Korneva H.A."/>
            <person name="Lehrer R.I."/>
        </authorList>
    </citation>
    <scope>PROTEIN SEQUENCE OF 131-148</scope>
    <source>
        <tissue>Leukocyte</tissue>
    </source>
</reference>
<reference key="4">
    <citation type="journal article" date="1993" name="FEBS Lett.">
        <title>Primary structure of three cationic peptides from porcine neutrophils. Sequence determination by the combined usage of electrospray ionization mass spectrometry and Edman degradation.</title>
        <authorList>
            <person name="Mirgorodskaya O.A."/>
            <person name="Shevchenko A.A."/>
            <person name="Abdalla K.O.M.A."/>
            <person name="Chernushevich I.V."/>
            <person name="Egorov T.A."/>
            <person name="Musoliamov A.X."/>
            <person name="Kokryakov V.N."/>
            <person name="Shamova O.V."/>
        </authorList>
    </citation>
    <scope>PROTEIN SEQUENCE OF 131-148</scope>
    <source>
        <tissue>Neutrophil</tissue>
    </source>
</reference>
<reference key="5">
    <citation type="journal article" date="1996" name="Eur. J. Biochem.">
        <title>Synthesis and solution structure of the antimicrobial peptide protegrin-1.</title>
        <authorList>
            <person name="Aumelase A."/>
            <person name="Mangoni M."/>
            <person name="Roumestand C."/>
            <person name="Chiche L."/>
            <person name="Despaux E."/>
            <person name="Grassy G."/>
            <person name="Calas B."/>
            <person name="Chavanieu A."/>
        </authorList>
    </citation>
    <scope>STRUCTURE BY NMR OF PROTEGRIN 1</scope>
</reference>
<reference key="6">
    <citation type="journal article" date="1996" name="Chem. Biol.">
        <title>Solution structure of protegrin-1, a broad-spectrum antimicrobial peptide from porcine leukocytes.</title>
        <authorList>
            <person name="Fahrner R.L."/>
            <person name="Dieckmann T."/>
            <person name="Harwig S.S."/>
            <person name="Lehrer R.I."/>
            <person name="Eisenberg D."/>
            <person name="Feigon J."/>
        </authorList>
    </citation>
    <scope>STRUCTURE BY NMR OF PROTEGRIN 1</scope>
</reference>
<evidence type="ECO:0000250" key="1"/>
<evidence type="ECO:0000255" key="2"/>
<evidence type="ECO:0000256" key="3">
    <source>
        <dbReference type="SAM" id="MobiDB-lite"/>
    </source>
</evidence>
<evidence type="ECO:0000269" key="4">
    <source>
    </source>
</evidence>
<evidence type="ECO:0000269" key="5">
    <source>
    </source>
</evidence>
<evidence type="ECO:0000269" key="6">
    <source>
    </source>
</evidence>
<evidence type="ECO:0000305" key="7"/>
<evidence type="ECO:0007829" key="8">
    <source>
        <dbReference type="PDB" id="1PG1"/>
    </source>
</evidence>
<dbReference type="EMBL" id="X79868">
    <property type="protein sequence ID" value="CAA56251.1"/>
    <property type="molecule type" value="mRNA"/>
</dbReference>
<dbReference type="EMBL" id="X84094">
    <property type="protein sequence ID" value="CAA58890.1"/>
    <property type="molecule type" value="Genomic_DNA"/>
</dbReference>
<dbReference type="PIR" id="S66284">
    <property type="entry name" value="S57607"/>
</dbReference>
<dbReference type="RefSeq" id="NP_001116621.1">
    <property type="nucleotide sequence ID" value="NM_001123149.1"/>
</dbReference>
<dbReference type="PDB" id="1PG1">
    <property type="method" value="NMR"/>
    <property type="chains" value="A=131-148"/>
</dbReference>
<dbReference type="PDB" id="1ZY6">
    <property type="method" value="NMR"/>
    <property type="chains" value="A/B=131-148"/>
</dbReference>
<dbReference type="PDBsum" id="1PG1"/>
<dbReference type="PDBsum" id="1ZY6"/>
<dbReference type="BMRB" id="P32194"/>
<dbReference type="SMR" id="P32194"/>
<dbReference type="DIP" id="DIP-61300N"/>
<dbReference type="FunCoup" id="P32194">
    <property type="interactions" value="193"/>
</dbReference>
<dbReference type="TCDB" id="1.C.33.1.9">
    <property type="family name" value="the cathelicidin (cathelicidin) family"/>
</dbReference>
<dbReference type="PeptideAtlas" id="P32194"/>
<dbReference type="Ensembl" id="ENSSSCT00070010715.1">
    <property type="protein sequence ID" value="ENSSSCP00070008821.1"/>
    <property type="gene ID" value="ENSSSCG00070005556.1"/>
</dbReference>
<dbReference type="GeneID" id="100144483"/>
<dbReference type="KEGG" id="ssc:100144483"/>
<dbReference type="CTD" id="100144483"/>
<dbReference type="eggNOG" id="ENOG502SAES">
    <property type="taxonomic scope" value="Eukaryota"/>
</dbReference>
<dbReference type="InParanoid" id="P32194"/>
<dbReference type="OrthoDB" id="9930485at2759"/>
<dbReference type="EvolutionaryTrace" id="P32194"/>
<dbReference type="Proteomes" id="UP000008227">
    <property type="component" value="Unplaced"/>
</dbReference>
<dbReference type="Proteomes" id="UP000314985">
    <property type="component" value="Unassembled WGS sequence"/>
</dbReference>
<dbReference type="Proteomes" id="UP000694570">
    <property type="component" value="Unplaced"/>
</dbReference>
<dbReference type="Proteomes" id="UP000694571">
    <property type="component" value="Unplaced"/>
</dbReference>
<dbReference type="Proteomes" id="UP000694720">
    <property type="component" value="Unplaced"/>
</dbReference>
<dbReference type="Proteomes" id="UP000694722">
    <property type="component" value="Unplaced"/>
</dbReference>
<dbReference type="Proteomes" id="UP000694723">
    <property type="component" value="Unplaced"/>
</dbReference>
<dbReference type="Proteomes" id="UP000694724">
    <property type="component" value="Unplaced"/>
</dbReference>
<dbReference type="Proteomes" id="UP000694725">
    <property type="component" value="Unplaced"/>
</dbReference>
<dbReference type="Proteomes" id="UP000694726">
    <property type="component" value="Unplaced"/>
</dbReference>
<dbReference type="Proteomes" id="UP000694727">
    <property type="component" value="Unplaced"/>
</dbReference>
<dbReference type="Proteomes" id="UP000694728">
    <property type="component" value="Unplaced"/>
</dbReference>
<dbReference type="GO" id="GO:0005615">
    <property type="term" value="C:extracellular space"/>
    <property type="evidence" value="ECO:0000318"/>
    <property type="project" value="GO_Central"/>
</dbReference>
<dbReference type="GO" id="GO:0001530">
    <property type="term" value="F:lipopolysaccharide binding"/>
    <property type="evidence" value="ECO:0000318"/>
    <property type="project" value="GO_Central"/>
</dbReference>
<dbReference type="GO" id="GO:0061844">
    <property type="term" value="P:antimicrobial humoral immune response mediated by antimicrobial peptide"/>
    <property type="evidence" value="ECO:0000318"/>
    <property type="project" value="GO_Central"/>
</dbReference>
<dbReference type="GO" id="GO:0050829">
    <property type="term" value="P:defense response to Gram-negative bacterium"/>
    <property type="evidence" value="ECO:0000318"/>
    <property type="project" value="GO_Central"/>
</dbReference>
<dbReference type="GO" id="GO:0050830">
    <property type="term" value="P:defense response to Gram-positive bacterium"/>
    <property type="evidence" value="ECO:0000318"/>
    <property type="project" value="GO_Central"/>
</dbReference>
<dbReference type="GO" id="GO:0045087">
    <property type="term" value="P:innate immune response"/>
    <property type="evidence" value="ECO:0000318"/>
    <property type="project" value="GO_Central"/>
</dbReference>
<dbReference type="FunFam" id="3.10.450.10:FF:000003">
    <property type="entry name" value="Cathelicidin antimicrobial peptide"/>
    <property type="match status" value="1"/>
</dbReference>
<dbReference type="Gene3D" id="3.10.450.10">
    <property type="match status" value="1"/>
</dbReference>
<dbReference type="InterPro" id="IPR001894">
    <property type="entry name" value="Cathelicidin-like"/>
</dbReference>
<dbReference type="InterPro" id="IPR018216">
    <property type="entry name" value="Cathelicidin_CS"/>
</dbReference>
<dbReference type="InterPro" id="IPR046350">
    <property type="entry name" value="Cystatin_sf"/>
</dbReference>
<dbReference type="PANTHER" id="PTHR10206">
    <property type="entry name" value="CATHELICIDIN"/>
    <property type="match status" value="1"/>
</dbReference>
<dbReference type="PANTHER" id="PTHR10206:SF2">
    <property type="entry name" value="CATHELICIDIN ANTIMICROBIAL PEPTIDE"/>
    <property type="match status" value="1"/>
</dbReference>
<dbReference type="Pfam" id="PF00666">
    <property type="entry name" value="Cathelicidins"/>
    <property type="match status" value="1"/>
</dbReference>
<dbReference type="SUPFAM" id="SSF54403">
    <property type="entry name" value="Cystatin/monellin"/>
    <property type="match status" value="1"/>
</dbReference>
<dbReference type="PROSITE" id="PS00946">
    <property type="entry name" value="CATHELICIDINS_1"/>
    <property type="match status" value="1"/>
</dbReference>
<dbReference type="PROSITE" id="PS00947">
    <property type="entry name" value="CATHELICIDINS_2"/>
    <property type="match status" value="1"/>
</dbReference>
<gene>
    <name type="primary">NPG1</name>
</gene>
<protein>
    <recommendedName>
        <fullName>Protegrin-1</fullName>
        <shortName>PG-1</shortName>
    </recommendedName>
    <alternativeName>
        <fullName>Neutrophil peptide 1</fullName>
    </alternativeName>
</protein>